<gene>
    <name evidence="1" type="primary">speE</name>
    <name type="ordered locus">MT2675</name>
</gene>
<proteinExistence type="inferred from homology"/>
<keyword id="KW-1003">Cell membrane</keyword>
<keyword id="KW-0472">Membrane</keyword>
<keyword id="KW-0620">Polyamine biosynthesis</keyword>
<keyword id="KW-1185">Reference proteome</keyword>
<keyword id="KW-0745">Spermidine biosynthesis</keyword>
<keyword id="KW-0808">Transferase</keyword>
<keyword id="KW-0812">Transmembrane</keyword>
<keyword id="KW-1133">Transmembrane helix</keyword>
<evidence type="ECO:0000255" key="1">
    <source>
        <dbReference type="HAMAP-Rule" id="MF_00198"/>
    </source>
</evidence>
<dbReference type="EC" id="2.5.1.16" evidence="1"/>
<dbReference type="EMBL" id="AE000516">
    <property type="protein sequence ID" value="AAK46991.1"/>
    <property type="molecule type" value="Genomic_DNA"/>
</dbReference>
<dbReference type="PIR" id="H70886">
    <property type="entry name" value="H70886"/>
</dbReference>
<dbReference type="RefSeq" id="WP_003899392.1">
    <property type="nucleotide sequence ID" value="NZ_KK341227.1"/>
</dbReference>
<dbReference type="SMR" id="P9WGE4"/>
<dbReference type="KEGG" id="mtc:MT2675"/>
<dbReference type="PATRIC" id="fig|83331.31.peg.2885"/>
<dbReference type="HOGENOM" id="CLU_034289_1_0_11"/>
<dbReference type="UniPathway" id="UPA00248">
    <property type="reaction ID" value="UER00314"/>
</dbReference>
<dbReference type="Proteomes" id="UP000001020">
    <property type="component" value="Chromosome"/>
</dbReference>
<dbReference type="GO" id="GO:0005886">
    <property type="term" value="C:plasma membrane"/>
    <property type="evidence" value="ECO:0007669"/>
    <property type="project" value="UniProtKB-SubCell"/>
</dbReference>
<dbReference type="GO" id="GO:0004766">
    <property type="term" value="F:spermidine synthase activity"/>
    <property type="evidence" value="ECO:0007669"/>
    <property type="project" value="UniProtKB-UniRule"/>
</dbReference>
<dbReference type="GO" id="GO:0010487">
    <property type="term" value="F:thermospermine synthase activity"/>
    <property type="evidence" value="ECO:0007669"/>
    <property type="project" value="UniProtKB-ARBA"/>
</dbReference>
<dbReference type="GO" id="GO:0008295">
    <property type="term" value="P:spermidine biosynthetic process"/>
    <property type="evidence" value="ECO:0007669"/>
    <property type="project" value="UniProtKB-UniRule"/>
</dbReference>
<dbReference type="CDD" id="cd02440">
    <property type="entry name" value="AdoMet_MTases"/>
    <property type="match status" value="1"/>
</dbReference>
<dbReference type="FunFam" id="3.40.50.150:FF:000088">
    <property type="entry name" value="Polyamine aminopropyltransferase"/>
    <property type="match status" value="1"/>
</dbReference>
<dbReference type="Gene3D" id="3.40.50.150">
    <property type="entry name" value="Vaccinia Virus protein VP39"/>
    <property type="match status" value="1"/>
</dbReference>
<dbReference type="HAMAP" id="MF_00198">
    <property type="entry name" value="Spermidine_synth"/>
    <property type="match status" value="1"/>
</dbReference>
<dbReference type="InterPro" id="IPR030374">
    <property type="entry name" value="PABS"/>
</dbReference>
<dbReference type="InterPro" id="IPR030373">
    <property type="entry name" value="PABS_CS"/>
</dbReference>
<dbReference type="InterPro" id="IPR029063">
    <property type="entry name" value="SAM-dependent_MTases_sf"/>
</dbReference>
<dbReference type="InterPro" id="IPR001045">
    <property type="entry name" value="Spermi_synthase"/>
</dbReference>
<dbReference type="NCBIfam" id="NF037959">
    <property type="entry name" value="MFS_SpdSyn"/>
    <property type="match status" value="1"/>
</dbReference>
<dbReference type="NCBIfam" id="NF002956">
    <property type="entry name" value="PRK03612.1"/>
    <property type="match status" value="1"/>
</dbReference>
<dbReference type="PANTHER" id="PTHR43317">
    <property type="entry name" value="THERMOSPERMINE SYNTHASE ACAULIS5"/>
    <property type="match status" value="1"/>
</dbReference>
<dbReference type="PANTHER" id="PTHR43317:SF1">
    <property type="entry name" value="THERMOSPERMINE SYNTHASE ACAULIS5"/>
    <property type="match status" value="1"/>
</dbReference>
<dbReference type="Pfam" id="PF01564">
    <property type="entry name" value="Spermine_synth"/>
    <property type="match status" value="1"/>
</dbReference>
<dbReference type="SUPFAM" id="SSF53335">
    <property type="entry name" value="S-adenosyl-L-methionine-dependent methyltransferases"/>
    <property type="match status" value="1"/>
</dbReference>
<dbReference type="PROSITE" id="PS01330">
    <property type="entry name" value="PABS_1"/>
    <property type="match status" value="1"/>
</dbReference>
<dbReference type="PROSITE" id="PS51006">
    <property type="entry name" value="PABS_2"/>
    <property type="match status" value="1"/>
</dbReference>
<sequence length="523" mass="54683">MTSTRQAGEATEASVRWRAVLLAAVAACAACGLVYELALLTLAASLNGGGIVATSLIVAGYIAALGAGALLIKPLLAHAAIAFIAVEAVLGIIGGLSAAALYAAFAFLDELDGSTLVLAVGTALIGGLVGAEVPLLMTLLQRGRVAGAADAGRTLANLNAADYLGALVGGLAWPFLLLPQLGMIRGAAVTGIVNLAAAGVVSIFLLRHVVSGRQLVTALCALAAALGLIATLLVHSHDIETTGRQQLYADPIIAYRHSAYQEIVVTRRGDDLRLYLDGGLQFCTRDEYRYTESLVYPAVSDGARSVLVLGGGDGLAARELLRQPGIEQIVQVELDPAVIELARTTLRDVNAGSLDNPRVHVVIDDAMSWLRGAAVPPAGFDAVIVDLRDPDTPVLGRLYSTEFYALAARALAPGGLMVVQAGSPYSTPTAFWRIISTIRSAGYAVTPYHVHVPTFGDWGFALARLTDIAPTPAVPSTAPALRFLDQQVLEAATVFSGDIRPRTLDPSTLDNPHIVEDMRHGWD</sequence>
<organism>
    <name type="scientific">Mycobacterium tuberculosis (strain CDC 1551 / Oshkosh)</name>
    <dbReference type="NCBI Taxonomy" id="83331"/>
    <lineage>
        <taxon>Bacteria</taxon>
        <taxon>Bacillati</taxon>
        <taxon>Actinomycetota</taxon>
        <taxon>Actinomycetes</taxon>
        <taxon>Mycobacteriales</taxon>
        <taxon>Mycobacteriaceae</taxon>
        <taxon>Mycobacterium</taxon>
        <taxon>Mycobacterium tuberculosis complex</taxon>
    </lineage>
</organism>
<protein>
    <recommendedName>
        <fullName evidence="1">Polyamine aminopropyltransferase</fullName>
    </recommendedName>
    <alternativeName>
        <fullName evidence="1">Putrescine aminopropyltransferase</fullName>
        <shortName evidence="1">PAPT</shortName>
    </alternativeName>
    <alternativeName>
        <fullName evidence="1">Spermidine synthase</fullName>
        <shortName evidence="1">SPDS</shortName>
        <shortName evidence="1">SPDSY</shortName>
        <ecNumber evidence="1">2.5.1.16</ecNumber>
    </alternativeName>
</protein>
<reference key="1">
    <citation type="journal article" date="2002" name="J. Bacteriol.">
        <title>Whole-genome comparison of Mycobacterium tuberculosis clinical and laboratory strains.</title>
        <authorList>
            <person name="Fleischmann R.D."/>
            <person name="Alland D."/>
            <person name="Eisen J.A."/>
            <person name="Carpenter L."/>
            <person name="White O."/>
            <person name="Peterson J.D."/>
            <person name="DeBoy R.T."/>
            <person name="Dodson R.J."/>
            <person name="Gwinn M.L."/>
            <person name="Haft D.H."/>
            <person name="Hickey E.K."/>
            <person name="Kolonay J.F."/>
            <person name="Nelson W.C."/>
            <person name="Umayam L.A."/>
            <person name="Ermolaeva M.D."/>
            <person name="Salzberg S.L."/>
            <person name="Delcher A."/>
            <person name="Utterback T.R."/>
            <person name="Weidman J.F."/>
            <person name="Khouri H.M."/>
            <person name="Gill J."/>
            <person name="Mikula A."/>
            <person name="Bishai W."/>
            <person name="Jacobs W.R. Jr."/>
            <person name="Venter J.C."/>
            <person name="Fraser C.M."/>
        </authorList>
    </citation>
    <scope>NUCLEOTIDE SEQUENCE [LARGE SCALE GENOMIC DNA]</scope>
    <source>
        <strain>CDC 1551 / Oshkosh</strain>
    </source>
</reference>
<feature type="chain" id="PRO_0000428376" description="Polyamine aminopropyltransferase">
    <location>
        <begin position="1"/>
        <end position="523"/>
    </location>
</feature>
<feature type="transmembrane region" description="Helical" evidence="1">
    <location>
        <begin position="20"/>
        <end position="40"/>
    </location>
</feature>
<feature type="transmembrane region" description="Helical" evidence="1">
    <location>
        <begin position="51"/>
        <end position="71"/>
    </location>
</feature>
<feature type="transmembrane region" description="Helical" evidence="1">
    <location>
        <begin position="88"/>
        <end position="108"/>
    </location>
</feature>
<feature type="transmembrane region" description="Helical" evidence="1">
    <location>
        <begin position="116"/>
        <end position="136"/>
    </location>
</feature>
<feature type="transmembrane region" description="Helical" evidence="1">
    <location>
        <begin position="164"/>
        <end position="184"/>
    </location>
</feature>
<feature type="transmembrane region" description="Helical" evidence="1">
    <location>
        <begin position="186"/>
        <end position="206"/>
    </location>
</feature>
<feature type="transmembrane region" description="Helical" evidence="1">
    <location>
        <begin position="215"/>
        <end position="235"/>
    </location>
</feature>
<feature type="domain" description="PABS" evidence="1">
    <location>
        <begin position="231"/>
        <end position="465"/>
    </location>
</feature>
<feature type="region of interest" description="Spermidine synthase">
    <location>
        <begin position="203"/>
        <end position="478"/>
    </location>
</feature>
<feature type="active site" description="Proton acceptor" evidence="1">
    <location>
        <position position="386"/>
    </location>
</feature>
<feature type="binding site" evidence="1">
    <location>
        <position position="261"/>
    </location>
    <ligand>
        <name>S-methyl-5'-thioadenosine</name>
        <dbReference type="ChEBI" id="CHEBI:17509"/>
    </ligand>
</feature>
<feature type="binding site" evidence="1">
    <location>
        <position position="313"/>
    </location>
    <ligand>
        <name>spermidine</name>
        <dbReference type="ChEBI" id="CHEBI:57834"/>
    </ligand>
</feature>
<feature type="binding site" evidence="1">
    <location>
        <position position="333"/>
    </location>
    <ligand>
        <name>S-methyl-5'-thioadenosine</name>
        <dbReference type="ChEBI" id="CHEBI:17509"/>
    </ligand>
</feature>
<feature type="binding site" evidence="1">
    <location>
        <begin position="365"/>
        <end position="366"/>
    </location>
    <ligand>
        <name>S-methyl-5'-thioadenosine</name>
        <dbReference type="ChEBI" id="CHEBI:17509"/>
    </ligand>
</feature>
<accession>P9WGE4</accession>
<accession>L0TD16</accession>
<accession>O33279</accession>
<comment type="function">
    <text evidence="1">Catalyzes the irreversible transfer of a propylamine group from the amino donor S-adenosylmethioninamine (decarboxy-AdoMet) to putrescine (1,4-diaminobutane) to yield spermidine.</text>
</comment>
<comment type="catalytic activity">
    <reaction evidence="1">
        <text>S-adenosyl 3-(methylsulfanyl)propylamine + putrescine = S-methyl-5'-thioadenosine + spermidine + H(+)</text>
        <dbReference type="Rhea" id="RHEA:12721"/>
        <dbReference type="ChEBI" id="CHEBI:15378"/>
        <dbReference type="ChEBI" id="CHEBI:17509"/>
        <dbReference type="ChEBI" id="CHEBI:57443"/>
        <dbReference type="ChEBI" id="CHEBI:57834"/>
        <dbReference type="ChEBI" id="CHEBI:326268"/>
        <dbReference type="EC" id="2.5.1.16"/>
    </reaction>
</comment>
<comment type="pathway">
    <text evidence="1">Amine and polyamine biosynthesis; spermidine biosynthesis; spermidine from putrescine: step 1/1.</text>
</comment>
<comment type="subunit">
    <text evidence="1">Homodimer or homotetramer.</text>
</comment>
<comment type="subcellular location">
    <subcellularLocation>
        <location evidence="1">Cell membrane</location>
        <topology evidence="1">Multi-pass membrane protein</topology>
    </subcellularLocation>
</comment>
<comment type="similarity">
    <text evidence="1">Belongs to the spermidine/spermine synthase family.</text>
</comment>
<name>SPEE_MYCTO</name>